<name>EFG_SHIDS</name>
<reference key="1">
    <citation type="journal article" date="2005" name="Nucleic Acids Res.">
        <title>Genome dynamics and diversity of Shigella species, the etiologic agents of bacillary dysentery.</title>
        <authorList>
            <person name="Yang F."/>
            <person name="Yang J."/>
            <person name="Zhang X."/>
            <person name="Chen L."/>
            <person name="Jiang Y."/>
            <person name="Yan Y."/>
            <person name="Tang X."/>
            <person name="Wang J."/>
            <person name="Xiong Z."/>
            <person name="Dong J."/>
            <person name="Xue Y."/>
            <person name="Zhu Y."/>
            <person name="Xu X."/>
            <person name="Sun L."/>
            <person name="Chen S."/>
            <person name="Nie H."/>
            <person name="Peng J."/>
            <person name="Xu J."/>
            <person name="Wang Y."/>
            <person name="Yuan Z."/>
            <person name="Wen Y."/>
            <person name="Yao Z."/>
            <person name="Shen Y."/>
            <person name="Qiang B."/>
            <person name="Hou Y."/>
            <person name="Yu J."/>
            <person name="Jin Q."/>
        </authorList>
    </citation>
    <scope>NUCLEOTIDE SEQUENCE [LARGE SCALE GENOMIC DNA]</scope>
    <source>
        <strain>Sd197</strain>
    </source>
</reference>
<organism>
    <name type="scientific">Shigella dysenteriae serotype 1 (strain Sd197)</name>
    <dbReference type="NCBI Taxonomy" id="300267"/>
    <lineage>
        <taxon>Bacteria</taxon>
        <taxon>Pseudomonadati</taxon>
        <taxon>Pseudomonadota</taxon>
        <taxon>Gammaproteobacteria</taxon>
        <taxon>Enterobacterales</taxon>
        <taxon>Enterobacteriaceae</taxon>
        <taxon>Shigella</taxon>
    </lineage>
</organism>
<protein>
    <recommendedName>
        <fullName evidence="2">Elongation factor G</fullName>
        <shortName evidence="2">EF-G</shortName>
    </recommendedName>
</protein>
<dbReference type="EMBL" id="CP000034">
    <property type="protein sequence ID" value="ABB63479.1"/>
    <property type="molecule type" value="Genomic_DNA"/>
</dbReference>
<dbReference type="RefSeq" id="WP_000124700.1">
    <property type="nucleotide sequence ID" value="NC_007606.1"/>
</dbReference>
<dbReference type="RefSeq" id="YP_404970.1">
    <property type="nucleotide sequence ID" value="NC_007606.1"/>
</dbReference>
<dbReference type="SMR" id="Q32B26"/>
<dbReference type="STRING" id="300267.SDY_3501"/>
<dbReference type="EnsemblBacteria" id="ABB63479">
    <property type="protein sequence ID" value="ABB63479"/>
    <property type="gene ID" value="SDY_3501"/>
</dbReference>
<dbReference type="GeneID" id="93778658"/>
<dbReference type="KEGG" id="sdy:SDY_3501"/>
<dbReference type="PATRIC" id="fig|300267.13.peg.4155"/>
<dbReference type="HOGENOM" id="CLU_002794_4_1_6"/>
<dbReference type="Proteomes" id="UP000002716">
    <property type="component" value="Chromosome"/>
</dbReference>
<dbReference type="GO" id="GO:0005737">
    <property type="term" value="C:cytoplasm"/>
    <property type="evidence" value="ECO:0007669"/>
    <property type="project" value="UniProtKB-SubCell"/>
</dbReference>
<dbReference type="GO" id="GO:0005525">
    <property type="term" value="F:GTP binding"/>
    <property type="evidence" value="ECO:0007669"/>
    <property type="project" value="UniProtKB-UniRule"/>
</dbReference>
<dbReference type="GO" id="GO:0003924">
    <property type="term" value="F:GTPase activity"/>
    <property type="evidence" value="ECO:0007669"/>
    <property type="project" value="InterPro"/>
</dbReference>
<dbReference type="GO" id="GO:0097216">
    <property type="term" value="F:guanosine tetraphosphate binding"/>
    <property type="evidence" value="ECO:0007669"/>
    <property type="project" value="UniProtKB-ARBA"/>
</dbReference>
<dbReference type="GO" id="GO:0003746">
    <property type="term" value="F:translation elongation factor activity"/>
    <property type="evidence" value="ECO:0007669"/>
    <property type="project" value="UniProtKB-UniRule"/>
</dbReference>
<dbReference type="GO" id="GO:0032790">
    <property type="term" value="P:ribosome disassembly"/>
    <property type="evidence" value="ECO:0007669"/>
    <property type="project" value="TreeGrafter"/>
</dbReference>
<dbReference type="CDD" id="cd01886">
    <property type="entry name" value="EF-G"/>
    <property type="match status" value="1"/>
</dbReference>
<dbReference type="CDD" id="cd16262">
    <property type="entry name" value="EFG_III"/>
    <property type="match status" value="1"/>
</dbReference>
<dbReference type="CDD" id="cd01434">
    <property type="entry name" value="EFG_mtEFG1_IV"/>
    <property type="match status" value="1"/>
</dbReference>
<dbReference type="CDD" id="cd03713">
    <property type="entry name" value="EFG_mtEFG_C"/>
    <property type="match status" value="1"/>
</dbReference>
<dbReference type="CDD" id="cd04088">
    <property type="entry name" value="EFG_mtEFG_II"/>
    <property type="match status" value="1"/>
</dbReference>
<dbReference type="FunFam" id="2.40.30.10:FF:000006">
    <property type="entry name" value="Elongation factor G"/>
    <property type="match status" value="1"/>
</dbReference>
<dbReference type="FunFam" id="3.30.230.10:FF:000003">
    <property type="entry name" value="Elongation factor G"/>
    <property type="match status" value="1"/>
</dbReference>
<dbReference type="FunFam" id="3.30.70.240:FF:000001">
    <property type="entry name" value="Elongation factor G"/>
    <property type="match status" value="1"/>
</dbReference>
<dbReference type="FunFam" id="3.30.70.870:FF:000001">
    <property type="entry name" value="Elongation factor G"/>
    <property type="match status" value="1"/>
</dbReference>
<dbReference type="FunFam" id="3.40.50.300:FF:000029">
    <property type="entry name" value="Elongation factor G"/>
    <property type="match status" value="1"/>
</dbReference>
<dbReference type="Gene3D" id="3.30.230.10">
    <property type="match status" value="1"/>
</dbReference>
<dbReference type="Gene3D" id="3.30.70.240">
    <property type="match status" value="1"/>
</dbReference>
<dbReference type="Gene3D" id="3.30.70.870">
    <property type="entry name" value="Elongation Factor G (Translational Gtpase), domain 3"/>
    <property type="match status" value="1"/>
</dbReference>
<dbReference type="Gene3D" id="3.40.50.300">
    <property type="entry name" value="P-loop containing nucleotide triphosphate hydrolases"/>
    <property type="match status" value="1"/>
</dbReference>
<dbReference type="Gene3D" id="2.40.30.10">
    <property type="entry name" value="Translation factors"/>
    <property type="match status" value="1"/>
</dbReference>
<dbReference type="HAMAP" id="MF_00054_B">
    <property type="entry name" value="EF_G_EF_2_B"/>
    <property type="match status" value="1"/>
</dbReference>
<dbReference type="InterPro" id="IPR041095">
    <property type="entry name" value="EFG_II"/>
</dbReference>
<dbReference type="InterPro" id="IPR009022">
    <property type="entry name" value="EFG_III"/>
</dbReference>
<dbReference type="InterPro" id="IPR035647">
    <property type="entry name" value="EFG_III/V"/>
</dbReference>
<dbReference type="InterPro" id="IPR047872">
    <property type="entry name" value="EFG_IV"/>
</dbReference>
<dbReference type="InterPro" id="IPR035649">
    <property type="entry name" value="EFG_V"/>
</dbReference>
<dbReference type="InterPro" id="IPR000640">
    <property type="entry name" value="EFG_V-like"/>
</dbReference>
<dbReference type="InterPro" id="IPR004161">
    <property type="entry name" value="EFTu-like_2"/>
</dbReference>
<dbReference type="InterPro" id="IPR031157">
    <property type="entry name" value="G_TR_CS"/>
</dbReference>
<dbReference type="InterPro" id="IPR027417">
    <property type="entry name" value="P-loop_NTPase"/>
</dbReference>
<dbReference type="InterPro" id="IPR020568">
    <property type="entry name" value="Ribosomal_Su5_D2-typ_SF"/>
</dbReference>
<dbReference type="InterPro" id="IPR014721">
    <property type="entry name" value="Ribsml_uS5_D2-typ_fold_subgr"/>
</dbReference>
<dbReference type="InterPro" id="IPR005225">
    <property type="entry name" value="Small_GTP-bd"/>
</dbReference>
<dbReference type="InterPro" id="IPR000795">
    <property type="entry name" value="T_Tr_GTP-bd_dom"/>
</dbReference>
<dbReference type="InterPro" id="IPR009000">
    <property type="entry name" value="Transl_B-barrel_sf"/>
</dbReference>
<dbReference type="InterPro" id="IPR004540">
    <property type="entry name" value="Transl_elong_EFG/EF2"/>
</dbReference>
<dbReference type="InterPro" id="IPR005517">
    <property type="entry name" value="Transl_elong_EFG/EF2_IV"/>
</dbReference>
<dbReference type="NCBIfam" id="TIGR00484">
    <property type="entry name" value="EF-G"/>
    <property type="match status" value="1"/>
</dbReference>
<dbReference type="NCBIfam" id="NF009381">
    <property type="entry name" value="PRK12740.1-5"/>
    <property type="match status" value="1"/>
</dbReference>
<dbReference type="NCBIfam" id="TIGR00231">
    <property type="entry name" value="small_GTP"/>
    <property type="match status" value="1"/>
</dbReference>
<dbReference type="PANTHER" id="PTHR43261:SF1">
    <property type="entry name" value="RIBOSOME-RELEASING FACTOR 2, MITOCHONDRIAL"/>
    <property type="match status" value="1"/>
</dbReference>
<dbReference type="PANTHER" id="PTHR43261">
    <property type="entry name" value="TRANSLATION ELONGATION FACTOR G-RELATED"/>
    <property type="match status" value="1"/>
</dbReference>
<dbReference type="Pfam" id="PF00679">
    <property type="entry name" value="EFG_C"/>
    <property type="match status" value="1"/>
</dbReference>
<dbReference type="Pfam" id="PF14492">
    <property type="entry name" value="EFG_III"/>
    <property type="match status" value="1"/>
</dbReference>
<dbReference type="Pfam" id="PF03764">
    <property type="entry name" value="EFG_IV"/>
    <property type="match status" value="1"/>
</dbReference>
<dbReference type="Pfam" id="PF00009">
    <property type="entry name" value="GTP_EFTU"/>
    <property type="match status" value="1"/>
</dbReference>
<dbReference type="Pfam" id="PF03144">
    <property type="entry name" value="GTP_EFTU_D2"/>
    <property type="match status" value="1"/>
</dbReference>
<dbReference type="PRINTS" id="PR00315">
    <property type="entry name" value="ELONGATNFCT"/>
</dbReference>
<dbReference type="SMART" id="SM00838">
    <property type="entry name" value="EFG_C"/>
    <property type="match status" value="1"/>
</dbReference>
<dbReference type="SMART" id="SM00889">
    <property type="entry name" value="EFG_IV"/>
    <property type="match status" value="1"/>
</dbReference>
<dbReference type="SUPFAM" id="SSF54980">
    <property type="entry name" value="EF-G C-terminal domain-like"/>
    <property type="match status" value="2"/>
</dbReference>
<dbReference type="SUPFAM" id="SSF52540">
    <property type="entry name" value="P-loop containing nucleoside triphosphate hydrolases"/>
    <property type="match status" value="1"/>
</dbReference>
<dbReference type="SUPFAM" id="SSF54211">
    <property type="entry name" value="Ribosomal protein S5 domain 2-like"/>
    <property type="match status" value="1"/>
</dbReference>
<dbReference type="SUPFAM" id="SSF50447">
    <property type="entry name" value="Translation proteins"/>
    <property type="match status" value="1"/>
</dbReference>
<dbReference type="PROSITE" id="PS00301">
    <property type="entry name" value="G_TR_1"/>
    <property type="match status" value="1"/>
</dbReference>
<dbReference type="PROSITE" id="PS51722">
    <property type="entry name" value="G_TR_2"/>
    <property type="match status" value="1"/>
</dbReference>
<gene>
    <name evidence="2" type="primary">fusA</name>
    <name type="ordered locus">SDY_3501</name>
</gene>
<keyword id="KW-0007">Acetylation</keyword>
<keyword id="KW-0963">Cytoplasm</keyword>
<keyword id="KW-0251">Elongation factor</keyword>
<keyword id="KW-0342">GTP-binding</keyword>
<keyword id="KW-0547">Nucleotide-binding</keyword>
<keyword id="KW-0648">Protein biosynthesis</keyword>
<keyword id="KW-1185">Reference proteome</keyword>
<evidence type="ECO:0000250" key="1"/>
<evidence type="ECO:0000255" key="2">
    <source>
        <dbReference type="HAMAP-Rule" id="MF_00054"/>
    </source>
</evidence>
<feature type="chain" id="PRO_0000225239" description="Elongation factor G">
    <location>
        <begin position="1"/>
        <end position="704"/>
    </location>
</feature>
<feature type="domain" description="tr-type G">
    <location>
        <begin position="8"/>
        <end position="290"/>
    </location>
</feature>
<feature type="binding site" evidence="2">
    <location>
        <begin position="17"/>
        <end position="24"/>
    </location>
    <ligand>
        <name>GTP</name>
        <dbReference type="ChEBI" id="CHEBI:37565"/>
    </ligand>
</feature>
<feature type="binding site" evidence="2">
    <location>
        <begin position="88"/>
        <end position="92"/>
    </location>
    <ligand>
        <name>GTP</name>
        <dbReference type="ChEBI" id="CHEBI:37565"/>
    </ligand>
</feature>
<feature type="binding site" evidence="2">
    <location>
        <begin position="142"/>
        <end position="145"/>
    </location>
    <ligand>
        <name>GTP</name>
        <dbReference type="ChEBI" id="CHEBI:37565"/>
    </ligand>
</feature>
<feature type="modified residue" description="N6-acetyllysine" evidence="1">
    <location>
        <position position="504"/>
    </location>
</feature>
<feature type="modified residue" description="N6-acetyllysine" evidence="1">
    <location>
        <position position="643"/>
    </location>
</feature>
<comment type="function">
    <text evidence="2">Catalyzes the GTP-dependent ribosomal translocation step during translation elongation. During this step, the ribosome changes from the pre-translocational (PRE) to the post-translocational (POST) state as the newly formed A-site-bound peptidyl-tRNA and P-site-bound deacylated tRNA move to the P and E sites, respectively. Catalyzes the coordinated movement of the two tRNA molecules, the mRNA and conformational changes in the ribosome.</text>
</comment>
<comment type="subcellular location">
    <subcellularLocation>
        <location evidence="2">Cytoplasm</location>
    </subcellularLocation>
</comment>
<comment type="similarity">
    <text evidence="2">Belongs to the TRAFAC class translation factor GTPase superfamily. Classic translation factor GTPase family. EF-G/EF-2 subfamily.</text>
</comment>
<proteinExistence type="inferred from homology"/>
<accession>Q32B26</accession>
<sequence>MARTTPIARYRNIGISAHIDAGKTTTTERILFYTGVNHKIGEVHDGAATMDWMEQEQERGITITSAATTAFWSGMAKQYEPHRINIIDTPGHVDFTIEVERSMRVLDGAVMVYCAVGGVQPQSETVWRQANKYKVPRIAFVNKMDRMGANFLKVVNQIKTRLGANPVPLQLAIGAEEHFTGVVDLVKMKAINWNDADQGVTFEYEDIPADMVELANEWHQNLIESAAEASEELMEKYLGGEELTEAEIKGALRQRVLNNEIILVTCGSAFKNKGVQAMLDAVIDYLPSPVDVPAINGILDDGKDTPAERHASDDEPFSALAFKIATDPFVGNLTFFRVYSGVVNSGDTVLNSVKAARERFGRIVQMHANKREEIKEVRAGDIAAAIGLKDVTTGDTLCDPDAPIILERMEFPEPVISIAVEPKTKADQEKMGLALGRLAKEDPSFRVWTDEESNQTIIAGMGELHLDIIVDRMKREFNVEANVGKPQVAYRETIRQKVTDVEGKHAKQSGGRGQYGHVVIDMYPLEPGSNPKGYEFINDIKGGVIPGEYIPAVDKGIQEQLKAGPLAGYPVVDMGIRLHFGSYHDVDSSELAFKLAASIAFKEGFKKAKPVLLEPIMKVEVETPEENTGDVIGDLSRRRGMLKGQESEVTGVKIHAEVPLSEMFGYATQLRSLTKGRASYTMEFLKYDEAPSNVAQAVIEARGK</sequence>